<keyword id="KW-0067">ATP-binding</keyword>
<keyword id="KW-0150">Chloroplast</keyword>
<keyword id="KW-0324">Glycolysis</keyword>
<keyword id="KW-0418">Kinase</keyword>
<keyword id="KW-0547">Nucleotide-binding</keyword>
<keyword id="KW-0934">Plastid</keyword>
<keyword id="KW-1185">Reference proteome</keyword>
<keyword id="KW-0808">Transferase</keyword>
<keyword id="KW-0809">Transit peptide</keyword>
<feature type="transit peptide" description="Chloroplast" evidence="2">
    <location>
        <begin position="1"/>
        <end position="37"/>
    </location>
</feature>
<feature type="chain" id="PRO_0000247567" description="Hexokinase-4, chloroplastic">
    <location>
        <begin position="38"/>
        <end position="509"/>
    </location>
</feature>
<feature type="domain" description="Hexokinase" evidence="3">
    <location>
        <begin position="45"/>
        <end position="496"/>
    </location>
</feature>
<feature type="region of interest" description="Hexokinase small subdomain" evidence="3">
    <location>
        <begin position="100"/>
        <end position="238"/>
    </location>
</feature>
<feature type="region of interest" description="Hexokinase large subdomain" evidence="3">
    <location>
        <begin position="239"/>
        <end position="485"/>
    </location>
</feature>
<feature type="binding site" evidence="1">
    <location>
        <position position="114"/>
    </location>
    <ligand>
        <name>ADP</name>
        <dbReference type="ChEBI" id="CHEBI:456216"/>
    </ligand>
</feature>
<feature type="binding site" evidence="1">
    <location>
        <position position="115"/>
    </location>
    <ligand>
        <name>ADP</name>
        <dbReference type="ChEBI" id="CHEBI:456216"/>
    </ligand>
</feature>
<feature type="binding site" evidence="1">
    <location>
        <position position="116"/>
    </location>
    <ligand>
        <name>ADP</name>
        <dbReference type="ChEBI" id="CHEBI:456216"/>
    </ligand>
</feature>
<feature type="binding site" evidence="1">
    <location>
        <position position="204"/>
    </location>
    <ligand>
        <name>D-glucose</name>
        <dbReference type="ChEBI" id="CHEBI:4167"/>
    </ligand>
</feature>
<feature type="binding site" evidence="1">
    <location>
        <position position="205"/>
    </location>
    <ligand>
        <name>D-glucose</name>
        <dbReference type="ChEBI" id="CHEBI:4167"/>
    </ligand>
</feature>
<feature type="binding site" evidence="1">
    <location>
        <position position="239"/>
    </location>
    <ligand>
        <name>D-glucose</name>
        <dbReference type="ChEBI" id="CHEBI:4167"/>
    </ligand>
</feature>
<feature type="binding site" evidence="1">
    <location>
        <position position="240"/>
    </location>
    <ligand>
        <name>D-glucose</name>
        <dbReference type="ChEBI" id="CHEBI:4167"/>
    </ligand>
</feature>
<feature type="binding site" evidence="1">
    <location>
        <position position="263"/>
    </location>
    <ligand>
        <name>ADP</name>
        <dbReference type="ChEBI" id="CHEBI:456216"/>
    </ligand>
</feature>
<feature type="binding site" evidence="1">
    <location>
        <position position="266"/>
    </location>
    <ligand>
        <name>D-glucose</name>
        <dbReference type="ChEBI" id="CHEBI:4167"/>
    </ligand>
</feature>
<feature type="binding site" evidence="1">
    <location>
        <position position="294"/>
    </location>
    <ligand>
        <name>D-glucose</name>
        <dbReference type="ChEBI" id="CHEBI:4167"/>
    </ligand>
</feature>
<feature type="binding site" evidence="1">
    <location>
        <position position="324"/>
    </location>
    <ligand>
        <name>D-glucose</name>
        <dbReference type="ChEBI" id="CHEBI:4167"/>
    </ligand>
</feature>
<feature type="binding site" evidence="1">
    <location>
        <position position="450"/>
    </location>
    <ligand>
        <name>ADP</name>
        <dbReference type="ChEBI" id="CHEBI:456216"/>
    </ligand>
</feature>
<reference key="1">
    <citation type="journal article" date="2006" name="Planta">
        <title>Structure, expression, and functional analysis of the hexokinase gene family in rice (Oryza sativa L.).</title>
        <authorList>
            <person name="Cho J.-I."/>
            <person name="Ryoo N."/>
            <person name="Ko S."/>
            <person name="Lee S.-K."/>
            <person name="Lee J."/>
            <person name="Jung K.-H."/>
            <person name="Lee Y.-H."/>
            <person name="Bhoo S.H."/>
            <person name="Winderickx J."/>
            <person name="An G."/>
            <person name="Hahn T.-R."/>
            <person name="Jeon J.-S."/>
        </authorList>
    </citation>
    <scope>NUCLEOTIDE SEQUENCE [MRNA]</scope>
    <scope>FUNCTION</scope>
    <scope>SUBCELLULAR LOCATION</scope>
    <scope>TISSUE SPECIFICITY</scope>
    <scope>DEVELOPMENTAL STAGE</scope>
    <scope>INDUCTION</scope>
    <scope>NOMENCLATURE</scope>
    <source>
        <strain>cv. Jinmi</strain>
    </source>
</reference>
<reference key="2">
    <citation type="submission" date="2001-04" db="EMBL/GenBank/DDBJ databases">
        <title>Rice hexokinase II mRNA.</title>
        <authorList>
            <person name="Wu P."/>
            <person name="Jiang H.-W."/>
            <person name="Yi K.-K."/>
        </authorList>
    </citation>
    <scope>NUCLEOTIDE SEQUENCE [MRNA]</scope>
</reference>
<reference key="3">
    <citation type="journal article" date="2005" name="Nature">
        <title>The map-based sequence of the rice genome.</title>
        <authorList>
            <consortium name="International rice genome sequencing project (IRGSP)"/>
        </authorList>
    </citation>
    <scope>NUCLEOTIDE SEQUENCE [LARGE SCALE GENOMIC DNA]</scope>
    <source>
        <strain>cv. Nipponbare</strain>
    </source>
</reference>
<reference key="4">
    <citation type="journal article" date="2008" name="Nucleic Acids Res.">
        <title>The rice annotation project database (RAP-DB): 2008 update.</title>
        <authorList>
            <consortium name="The rice annotation project (RAP)"/>
        </authorList>
    </citation>
    <scope>GENOME REANNOTATION</scope>
    <source>
        <strain>cv. Nipponbare</strain>
    </source>
</reference>
<reference key="5">
    <citation type="journal article" date="2013" name="Rice">
        <title>Improvement of the Oryza sativa Nipponbare reference genome using next generation sequence and optical map data.</title>
        <authorList>
            <person name="Kawahara Y."/>
            <person name="de la Bastide M."/>
            <person name="Hamilton J.P."/>
            <person name="Kanamori H."/>
            <person name="McCombie W.R."/>
            <person name="Ouyang S."/>
            <person name="Schwartz D.C."/>
            <person name="Tanaka T."/>
            <person name="Wu J."/>
            <person name="Zhou S."/>
            <person name="Childs K.L."/>
            <person name="Davidson R.M."/>
            <person name="Lin H."/>
            <person name="Quesada-Ocampo L."/>
            <person name="Vaillancourt B."/>
            <person name="Sakai H."/>
            <person name="Lee S.S."/>
            <person name="Kim J."/>
            <person name="Numa H."/>
            <person name="Itoh T."/>
            <person name="Buell C.R."/>
            <person name="Matsumoto T."/>
        </authorList>
    </citation>
    <scope>GENOME REANNOTATION</scope>
    <source>
        <strain>cv. Nipponbare</strain>
    </source>
</reference>
<reference key="6">
    <citation type="journal article" date="2005" name="PLoS Biol.">
        <title>The genomes of Oryza sativa: a history of duplications.</title>
        <authorList>
            <person name="Yu J."/>
            <person name="Wang J."/>
            <person name="Lin W."/>
            <person name="Li S."/>
            <person name="Li H."/>
            <person name="Zhou J."/>
            <person name="Ni P."/>
            <person name="Dong W."/>
            <person name="Hu S."/>
            <person name="Zeng C."/>
            <person name="Zhang J."/>
            <person name="Zhang Y."/>
            <person name="Li R."/>
            <person name="Xu Z."/>
            <person name="Li S."/>
            <person name="Li X."/>
            <person name="Zheng H."/>
            <person name="Cong L."/>
            <person name="Lin L."/>
            <person name="Yin J."/>
            <person name="Geng J."/>
            <person name="Li G."/>
            <person name="Shi J."/>
            <person name="Liu J."/>
            <person name="Lv H."/>
            <person name="Li J."/>
            <person name="Wang J."/>
            <person name="Deng Y."/>
            <person name="Ran L."/>
            <person name="Shi X."/>
            <person name="Wang X."/>
            <person name="Wu Q."/>
            <person name="Li C."/>
            <person name="Ren X."/>
            <person name="Wang J."/>
            <person name="Wang X."/>
            <person name="Li D."/>
            <person name="Liu D."/>
            <person name="Zhang X."/>
            <person name="Ji Z."/>
            <person name="Zhao W."/>
            <person name="Sun Y."/>
            <person name="Zhang Z."/>
            <person name="Bao J."/>
            <person name="Han Y."/>
            <person name="Dong L."/>
            <person name="Ji J."/>
            <person name="Chen P."/>
            <person name="Wu S."/>
            <person name="Liu J."/>
            <person name="Xiao Y."/>
            <person name="Bu D."/>
            <person name="Tan J."/>
            <person name="Yang L."/>
            <person name="Ye C."/>
            <person name="Zhang J."/>
            <person name="Xu J."/>
            <person name="Zhou Y."/>
            <person name="Yu Y."/>
            <person name="Zhang B."/>
            <person name="Zhuang S."/>
            <person name="Wei H."/>
            <person name="Liu B."/>
            <person name="Lei M."/>
            <person name="Yu H."/>
            <person name="Li Y."/>
            <person name="Xu H."/>
            <person name="Wei S."/>
            <person name="He X."/>
            <person name="Fang L."/>
            <person name="Zhang Z."/>
            <person name="Zhang Y."/>
            <person name="Huang X."/>
            <person name="Su Z."/>
            <person name="Tong W."/>
            <person name="Li J."/>
            <person name="Tong Z."/>
            <person name="Li S."/>
            <person name="Ye J."/>
            <person name="Wang L."/>
            <person name="Fang L."/>
            <person name="Lei T."/>
            <person name="Chen C.-S."/>
            <person name="Chen H.-C."/>
            <person name="Xu Z."/>
            <person name="Li H."/>
            <person name="Huang H."/>
            <person name="Zhang F."/>
            <person name="Xu H."/>
            <person name="Li N."/>
            <person name="Zhao C."/>
            <person name="Li S."/>
            <person name="Dong L."/>
            <person name="Huang Y."/>
            <person name="Li L."/>
            <person name="Xi Y."/>
            <person name="Qi Q."/>
            <person name="Li W."/>
            <person name="Zhang B."/>
            <person name="Hu W."/>
            <person name="Zhang Y."/>
            <person name="Tian X."/>
            <person name="Jiao Y."/>
            <person name="Liang X."/>
            <person name="Jin J."/>
            <person name="Gao L."/>
            <person name="Zheng W."/>
            <person name="Hao B."/>
            <person name="Liu S.-M."/>
            <person name="Wang W."/>
            <person name="Yuan L."/>
            <person name="Cao M."/>
            <person name="McDermott J."/>
            <person name="Samudrala R."/>
            <person name="Wang J."/>
            <person name="Wong G.K.-S."/>
            <person name="Yang H."/>
        </authorList>
    </citation>
    <scope>NUCLEOTIDE SEQUENCE [LARGE SCALE GENOMIC DNA]</scope>
    <source>
        <strain>cv. Nipponbare</strain>
    </source>
</reference>
<accession>Q6Z398</accession>
<accession>Q0D7Y5</accession>
<accession>Q94JW5</accession>
<sequence>MSAAAAIASPIPAAIAVVQQQRRGRSRGGGSGAAAVRCSAVAPTSAIAPILADLRLRCAAPLPVLRRVADAMASGMRAGLADDGAGELKMIPSHVYSLPTGNETGLFYALDLGGTNFRVLRVQLGGKDKRIIDTEFEQVSIPREIMHGITEDLFDFIASGLSRFVATEGDKFHLPQGRKRELGFTFSFPVNQTSIDSGILIKWTKGFAVSGTAGKDVVACLNAAMERQGLDMRVSALVNDTVGTLAGARYWDDDVMVAVILGTGTNACYIQRTEAIPKLQHLKLETGNTIINTEWGAFSDGLPLTEFDREMDDESINPGEQIFEKTISGMYLGEIVRRVLVKMAEVSDLFGHSFPKKLAEPFVLRTPHLCAMQQDTSDNLGEVESILSDVIGVSQASLLARRVTVEVSDCIIRRGGRLAGAGIVGILEKMENDSRGHIFGRRTVVAMDGGLYEKYPQYRRYMKEAVAELLGPERSNRIAIEHTKDGSGIGAALLAAANSKYAAAQISTR</sequence>
<name>HXK4_ORYSJ</name>
<evidence type="ECO:0000250" key="1">
    <source>
        <dbReference type="UniProtKB" id="Q8LQ68"/>
    </source>
</evidence>
<evidence type="ECO:0000255" key="2"/>
<evidence type="ECO:0000255" key="3">
    <source>
        <dbReference type="PROSITE-ProRule" id="PRU01084"/>
    </source>
</evidence>
<evidence type="ECO:0000269" key="4">
    <source>
    </source>
</evidence>
<evidence type="ECO:0000305" key="5"/>
<evidence type="ECO:0000305" key="6">
    <source>
    </source>
</evidence>
<evidence type="ECO:0000312" key="7">
    <source>
        <dbReference type="EMBL" id="BAF21038.1"/>
    </source>
</evidence>
<evidence type="ECO:0000312" key="8">
    <source>
        <dbReference type="EMBL" id="EAZ39028.1"/>
    </source>
</evidence>
<protein>
    <recommendedName>
        <fullName>Hexokinase-4, chloroplastic</fullName>
        <ecNumber evidence="6">2.7.1.1</ecNumber>
    </recommendedName>
    <alternativeName>
        <fullName>Hexokinase II</fullName>
    </alternativeName>
</protein>
<dbReference type="EC" id="2.7.1.1" evidence="6"/>
<dbReference type="EMBL" id="DQ116386">
    <property type="protein sequence ID" value="AAZ93621.1"/>
    <property type="molecule type" value="mRNA"/>
</dbReference>
<dbReference type="EMBL" id="AF372832">
    <property type="protein sequence ID" value="AAK51560.1"/>
    <property type="molecule type" value="mRNA"/>
</dbReference>
<dbReference type="EMBL" id="AP004379">
    <property type="protein sequence ID" value="BAD30694.1"/>
    <property type="molecule type" value="Genomic_DNA"/>
</dbReference>
<dbReference type="EMBL" id="AP005257">
    <property type="protein sequence ID" value="BAC84178.1"/>
    <property type="molecule type" value="Genomic_DNA"/>
</dbReference>
<dbReference type="EMBL" id="AP008213">
    <property type="protein sequence ID" value="BAF21038.1"/>
    <property type="molecule type" value="Genomic_DNA"/>
</dbReference>
<dbReference type="EMBL" id="AP014963">
    <property type="status" value="NOT_ANNOTATED_CDS"/>
    <property type="molecule type" value="Genomic_DNA"/>
</dbReference>
<dbReference type="EMBL" id="CM000144">
    <property type="protein sequence ID" value="EAZ39028.1"/>
    <property type="molecule type" value="Genomic_DNA"/>
</dbReference>
<dbReference type="RefSeq" id="XP_015645316.1">
    <property type="nucleotide sequence ID" value="XM_015789830.1"/>
</dbReference>
<dbReference type="SMR" id="Q6Z398"/>
<dbReference type="FunCoup" id="Q6Z398">
    <property type="interactions" value="1449"/>
</dbReference>
<dbReference type="STRING" id="39947.Q6Z398"/>
<dbReference type="PaxDb" id="39947-Q6Z398"/>
<dbReference type="EnsemblPlants" id="Os07t0197100-01">
    <property type="protein sequence ID" value="Os07t0197100-01"/>
    <property type="gene ID" value="Os07g0197100"/>
</dbReference>
<dbReference type="Gramene" id="Os07t0197100-01">
    <property type="protein sequence ID" value="Os07t0197100-01"/>
    <property type="gene ID" value="Os07g0197100"/>
</dbReference>
<dbReference type="KEGG" id="dosa:Os07g0197100"/>
<dbReference type="eggNOG" id="KOG1369">
    <property type="taxonomic scope" value="Eukaryota"/>
</dbReference>
<dbReference type="InParanoid" id="Q6Z398"/>
<dbReference type="OrthoDB" id="419537at2759"/>
<dbReference type="BRENDA" id="2.7.1.1">
    <property type="organism ID" value="4460"/>
</dbReference>
<dbReference type="PlantReactome" id="R-OSA-1119424">
    <property type="pathway name" value="Plastid glycolysis"/>
</dbReference>
<dbReference type="PlantReactome" id="R-OSA-1119601">
    <property type="pathway name" value="Trehalose degradation II"/>
</dbReference>
<dbReference type="UniPathway" id="UPA00109">
    <property type="reaction ID" value="UER00180"/>
</dbReference>
<dbReference type="UniPathway" id="UPA00242"/>
<dbReference type="Proteomes" id="UP000000763">
    <property type="component" value="Chromosome 7"/>
</dbReference>
<dbReference type="Proteomes" id="UP000007752">
    <property type="component" value="Chromosome 7"/>
</dbReference>
<dbReference type="Proteomes" id="UP000059680">
    <property type="component" value="Chromosome 7"/>
</dbReference>
<dbReference type="GO" id="GO:0009570">
    <property type="term" value="C:chloroplast stroma"/>
    <property type="evidence" value="ECO:0007669"/>
    <property type="project" value="UniProtKB-SubCell"/>
</dbReference>
<dbReference type="GO" id="GO:0005829">
    <property type="term" value="C:cytosol"/>
    <property type="evidence" value="ECO:0000318"/>
    <property type="project" value="GO_Central"/>
</dbReference>
<dbReference type="GO" id="GO:0005739">
    <property type="term" value="C:mitochondrion"/>
    <property type="evidence" value="ECO:0000318"/>
    <property type="project" value="GO_Central"/>
</dbReference>
<dbReference type="GO" id="GO:0005524">
    <property type="term" value="F:ATP binding"/>
    <property type="evidence" value="ECO:0007669"/>
    <property type="project" value="UniProtKB-KW"/>
</dbReference>
<dbReference type="GO" id="GO:0005536">
    <property type="term" value="F:D-glucose binding"/>
    <property type="evidence" value="ECO:0007669"/>
    <property type="project" value="InterPro"/>
</dbReference>
<dbReference type="GO" id="GO:0008865">
    <property type="term" value="F:fructokinase activity"/>
    <property type="evidence" value="ECO:0000318"/>
    <property type="project" value="GO_Central"/>
</dbReference>
<dbReference type="GO" id="GO:0004340">
    <property type="term" value="F:glucokinase activity"/>
    <property type="evidence" value="ECO:0000318"/>
    <property type="project" value="GO_Central"/>
</dbReference>
<dbReference type="GO" id="GO:0051156">
    <property type="term" value="P:glucose 6-phosphate metabolic process"/>
    <property type="evidence" value="ECO:0000318"/>
    <property type="project" value="GO_Central"/>
</dbReference>
<dbReference type="GO" id="GO:0006006">
    <property type="term" value="P:glucose metabolic process"/>
    <property type="evidence" value="ECO:0000318"/>
    <property type="project" value="GO_Central"/>
</dbReference>
<dbReference type="GO" id="GO:0006096">
    <property type="term" value="P:glycolytic process"/>
    <property type="evidence" value="ECO:0000318"/>
    <property type="project" value="GO_Central"/>
</dbReference>
<dbReference type="GO" id="GO:0001678">
    <property type="term" value="P:intracellular glucose homeostasis"/>
    <property type="evidence" value="ECO:0000318"/>
    <property type="project" value="GO_Central"/>
</dbReference>
<dbReference type="CDD" id="cd24020">
    <property type="entry name" value="ASKHA_NBD_HK_plant"/>
    <property type="match status" value="1"/>
</dbReference>
<dbReference type="FunFam" id="3.30.420.40:FF:000034">
    <property type="entry name" value="Phosphotransferase"/>
    <property type="match status" value="1"/>
</dbReference>
<dbReference type="FunFam" id="3.40.367.20:FF:000033">
    <property type="entry name" value="Phosphotransferase"/>
    <property type="match status" value="1"/>
</dbReference>
<dbReference type="Gene3D" id="3.30.420.40">
    <property type="match status" value="1"/>
</dbReference>
<dbReference type="Gene3D" id="3.40.367.20">
    <property type="match status" value="1"/>
</dbReference>
<dbReference type="InterPro" id="IPR043129">
    <property type="entry name" value="ATPase_NBD"/>
</dbReference>
<dbReference type="InterPro" id="IPR001312">
    <property type="entry name" value="Hexokinase"/>
</dbReference>
<dbReference type="InterPro" id="IPR019807">
    <property type="entry name" value="Hexokinase_BS"/>
</dbReference>
<dbReference type="InterPro" id="IPR022673">
    <property type="entry name" value="Hexokinase_C"/>
</dbReference>
<dbReference type="InterPro" id="IPR022672">
    <property type="entry name" value="Hexokinase_N"/>
</dbReference>
<dbReference type="PANTHER" id="PTHR19443">
    <property type="entry name" value="HEXOKINASE"/>
    <property type="match status" value="1"/>
</dbReference>
<dbReference type="PANTHER" id="PTHR19443:SF63">
    <property type="entry name" value="HEXOKINASE-LIKE 1 PROTEIN-RELATED"/>
    <property type="match status" value="1"/>
</dbReference>
<dbReference type="Pfam" id="PF00349">
    <property type="entry name" value="Hexokinase_1"/>
    <property type="match status" value="1"/>
</dbReference>
<dbReference type="Pfam" id="PF03727">
    <property type="entry name" value="Hexokinase_2"/>
    <property type="match status" value="1"/>
</dbReference>
<dbReference type="PRINTS" id="PR00475">
    <property type="entry name" value="HEXOKINASE"/>
</dbReference>
<dbReference type="SUPFAM" id="SSF53067">
    <property type="entry name" value="Actin-like ATPase domain"/>
    <property type="match status" value="2"/>
</dbReference>
<dbReference type="PROSITE" id="PS00378">
    <property type="entry name" value="HEXOKINASE_1"/>
    <property type="match status" value="1"/>
</dbReference>
<dbReference type="PROSITE" id="PS51748">
    <property type="entry name" value="HEXOKINASE_2"/>
    <property type="match status" value="1"/>
</dbReference>
<organism>
    <name type="scientific">Oryza sativa subsp. japonica</name>
    <name type="common">Rice</name>
    <dbReference type="NCBI Taxonomy" id="39947"/>
    <lineage>
        <taxon>Eukaryota</taxon>
        <taxon>Viridiplantae</taxon>
        <taxon>Streptophyta</taxon>
        <taxon>Embryophyta</taxon>
        <taxon>Tracheophyta</taxon>
        <taxon>Spermatophyta</taxon>
        <taxon>Magnoliopsida</taxon>
        <taxon>Liliopsida</taxon>
        <taxon>Poales</taxon>
        <taxon>Poaceae</taxon>
        <taxon>BOP clade</taxon>
        <taxon>Oryzoideae</taxon>
        <taxon>Oryzeae</taxon>
        <taxon>Oryzinae</taxon>
        <taxon>Oryza</taxon>
        <taxon>Oryza sativa</taxon>
    </lineage>
</organism>
<gene>
    <name type="primary">HXK4</name>
    <name evidence="7" type="ordered locus">Os07g0197100</name>
    <name evidence="5" type="ordered locus">LOC_Os07g09890</name>
    <name evidence="8" type="ORF">OsJ_23449</name>
    <name type="ORF">P0417F02.7</name>
    <name type="ORF">P0589E08.26</name>
</gene>
<proteinExistence type="evidence at transcript level"/>
<comment type="function">
    <text evidence="4">Fructose and glucose phosphorylating enzyme.</text>
</comment>
<comment type="catalytic activity">
    <reaction evidence="6">
        <text>a D-hexose + ATP = a D-hexose 6-phosphate + ADP + H(+)</text>
        <dbReference type="Rhea" id="RHEA:22740"/>
        <dbReference type="ChEBI" id="CHEBI:4194"/>
        <dbReference type="ChEBI" id="CHEBI:15378"/>
        <dbReference type="ChEBI" id="CHEBI:30616"/>
        <dbReference type="ChEBI" id="CHEBI:229467"/>
        <dbReference type="ChEBI" id="CHEBI:456216"/>
        <dbReference type="EC" id="2.7.1.1"/>
    </reaction>
    <physiologicalReaction direction="left-to-right" evidence="6">
        <dbReference type="Rhea" id="RHEA:22741"/>
    </physiologicalReaction>
</comment>
<comment type="catalytic activity">
    <reaction evidence="6">
        <text>D-fructose + ATP = D-fructose 6-phosphate + ADP + H(+)</text>
        <dbReference type="Rhea" id="RHEA:16125"/>
        <dbReference type="ChEBI" id="CHEBI:15378"/>
        <dbReference type="ChEBI" id="CHEBI:30616"/>
        <dbReference type="ChEBI" id="CHEBI:37721"/>
        <dbReference type="ChEBI" id="CHEBI:61527"/>
        <dbReference type="ChEBI" id="CHEBI:456216"/>
        <dbReference type="EC" id="2.7.1.1"/>
    </reaction>
    <physiologicalReaction direction="left-to-right" evidence="6">
        <dbReference type="Rhea" id="RHEA:16126"/>
    </physiologicalReaction>
</comment>
<comment type="catalytic activity">
    <reaction evidence="6">
        <text>D-glucose + ATP = D-glucose 6-phosphate + ADP + H(+)</text>
        <dbReference type="Rhea" id="RHEA:17825"/>
        <dbReference type="ChEBI" id="CHEBI:4167"/>
        <dbReference type="ChEBI" id="CHEBI:15378"/>
        <dbReference type="ChEBI" id="CHEBI:30616"/>
        <dbReference type="ChEBI" id="CHEBI:61548"/>
        <dbReference type="ChEBI" id="CHEBI:456216"/>
        <dbReference type="EC" id="2.7.1.1"/>
    </reaction>
    <physiologicalReaction direction="left-to-right" evidence="6">
        <dbReference type="Rhea" id="RHEA:17826"/>
    </physiologicalReaction>
</comment>
<comment type="pathway">
    <text evidence="6">Carbohydrate metabolism; hexose metabolism.</text>
</comment>
<comment type="pathway">
    <text evidence="6">Carbohydrate degradation; glycolysis; D-glyceraldehyde 3-phosphate and glycerone phosphate from D-glucose: step 1/4.</text>
</comment>
<comment type="subcellular location">
    <subcellularLocation>
        <location evidence="6">Plastid</location>
        <location evidence="6">Chloroplast stroma</location>
    </subcellularLocation>
</comment>
<comment type="tissue specificity">
    <text evidence="4">Expressed in roots, leaves, flowers, immature seeds, endosperm and seed coat.</text>
</comment>
<comment type="developmental stage">
    <text evidence="4">Expressed during flower development until 8 days after flowering.</text>
</comment>
<comment type="induction">
    <text evidence="4">Not induced by glucose or fructose treatment in leaves.</text>
</comment>
<comment type="similarity">
    <text evidence="3 5">Belongs to the hexokinase family.</text>
</comment>